<sequence length="165" mass="19268">MKTSRLPIAIQQAVMRRLREKLAQANLKLGCNYPEPKLSYTQRGTSAGTAWLESYEIRLNPVLLLENSEAFIEEVVPHELAHLLVWKHFGRVAPHGKEWKWMMESVLGVPARRTHQFELQSVRRNTFPYRCKCQEHQLTVRRHNRVVRGEAVYRCVHCGEQLVAK</sequence>
<comment type="cofactor">
    <cofactor evidence="1">
        <name>Zn(2+)</name>
        <dbReference type="ChEBI" id="CHEBI:29105"/>
    </cofactor>
    <text evidence="1">Binds 1 zinc ion.</text>
</comment>
<comment type="subcellular location">
    <subcellularLocation>
        <location evidence="1">Cytoplasm</location>
    </subcellularLocation>
</comment>
<comment type="similarity">
    <text evidence="1">Belongs to the SprT family.</text>
</comment>
<protein>
    <recommendedName>
        <fullName evidence="1">Protein SprT</fullName>
    </recommendedName>
</protein>
<organism>
    <name type="scientific">Shigella dysenteriae serotype 1 (strain Sd197)</name>
    <dbReference type="NCBI Taxonomy" id="300267"/>
    <lineage>
        <taxon>Bacteria</taxon>
        <taxon>Pseudomonadati</taxon>
        <taxon>Pseudomonadota</taxon>
        <taxon>Gammaproteobacteria</taxon>
        <taxon>Enterobacterales</taxon>
        <taxon>Enterobacteriaceae</taxon>
        <taxon>Shigella</taxon>
    </lineage>
</organism>
<dbReference type="EMBL" id="CP000034">
    <property type="protein sequence ID" value="ABB63142.1"/>
    <property type="molecule type" value="Genomic_DNA"/>
</dbReference>
<dbReference type="RefSeq" id="WP_000858391.1">
    <property type="nucleotide sequence ID" value="NC_007606.1"/>
</dbReference>
<dbReference type="RefSeq" id="YP_404633.1">
    <property type="nucleotide sequence ID" value="NC_007606.1"/>
</dbReference>
<dbReference type="STRING" id="300267.SDY_3128"/>
<dbReference type="EnsemblBacteria" id="ABB63142">
    <property type="protein sequence ID" value="ABB63142"/>
    <property type="gene ID" value="SDY_3128"/>
</dbReference>
<dbReference type="KEGG" id="sdy:SDY_3128"/>
<dbReference type="PATRIC" id="fig|300267.13.peg.3738"/>
<dbReference type="HOGENOM" id="CLU_113336_0_1_6"/>
<dbReference type="Proteomes" id="UP000002716">
    <property type="component" value="Chromosome"/>
</dbReference>
<dbReference type="GO" id="GO:0005737">
    <property type="term" value="C:cytoplasm"/>
    <property type="evidence" value="ECO:0007669"/>
    <property type="project" value="UniProtKB-SubCell"/>
</dbReference>
<dbReference type="GO" id="GO:0008270">
    <property type="term" value="F:zinc ion binding"/>
    <property type="evidence" value="ECO:0007669"/>
    <property type="project" value="UniProtKB-UniRule"/>
</dbReference>
<dbReference type="GO" id="GO:0006950">
    <property type="term" value="P:response to stress"/>
    <property type="evidence" value="ECO:0007669"/>
    <property type="project" value="UniProtKB-ARBA"/>
</dbReference>
<dbReference type="Gene3D" id="3.30.2010.10">
    <property type="entry name" value="Metalloproteases ('zincins'), catalytic domain"/>
    <property type="match status" value="1"/>
</dbReference>
<dbReference type="HAMAP" id="MF_00746">
    <property type="entry name" value="SprT"/>
    <property type="match status" value="1"/>
</dbReference>
<dbReference type="InterPro" id="IPR006640">
    <property type="entry name" value="SprT-like_domain"/>
</dbReference>
<dbReference type="InterPro" id="IPR035240">
    <property type="entry name" value="SprT_Zn_ribbon"/>
</dbReference>
<dbReference type="InterPro" id="IPR023483">
    <property type="entry name" value="Uncharacterised_SprT"/>
</dbReference>
<dbReference type="NCBIfam" id="NF003421">
    <property type="entry name" value="PRK04860.1"/>
    <property type="match status" value="1"/>
</dbReference>
<dbReference type="PANTHER" id="PTHR38773">
    <property type="entry name" value="PROTEIN SPRT"/>
    <property type="match status" value="1"/>
</dbReference>
<dbReference type="PANTHER" id="PTHR38773:SF1">
    <property type="entry name" value="PROTEIN SPRT"/>
    <property type="match status" value="1"/>
</dbReference>
<dbReference type="Pfam" id="PF10263">
    <property type="entry name" value="SprT-like"/>
    <property type="match status" value="1"/>
</dbReference>
<dbReference type="Pfam" id="PF17283">
    <property type="entry name" value="Zn_ribbon_SprT"/>
    <property type="match status" value="1"/>
</dbReference>
<dbReference type="SMART" id="SM00731">
    <property type="entry name" value="SprT"/>
    <property type="match status" value="1"/>
</dbReference>
<dbReference type="PROSITE" id="PS00142">
    <property type="entry name" value="ZINC_PROTEASE"/>
    <property type="match status" value="1"/>
</dbReference>
<reference key="1">
    <citation type="journal article" date="2005" name="Nucleic Acids Res.">
        <title>Genome dynamics and diversity of Shigella species, the etiologic agents of bacillary dysentery.</title>
        <authorList>
            <person name="Yang F."/>
            <person name="Yang J."/>
            <person name="Zhang X."/>
            <person name="Chen L."/>
            <person name="Jiang Y."/>
            <person name="Yan Y."/>
            <person name="Tang X."/>
            <person name="Wang J."/>
            <person name="Xiong Z."/>
            <person name="Dong J."/>
            <person name="Xue Y."/>
            <person name="Zhu Y."/>
            <person name="Xu X."/>
            <person name="Sun L."/>
            <person name="Chen S."/>
            <person name="Nie H."/>
            <person name="Peng J."/>
            <person name="Xu J."/>
            <person name="Wang Y."/>
            <person name="Yuan Z."/>
            <person name="Wen Y."/>
            <person name="Yao Z."/>
            <person name="Shen Y."/>
            <person name="Qiang B."/>
            <person name="Hou Y."/>
            <person name="Yu J."/>
            <person name="Jin Q."/>
        </authorList>
    </citation>
    <scope>NUCLEOTIDE SEQUENCE [LARGE SCALE GENOMIC DNA]</scope>
    <source>
        <strain>Sd197</strain>
    </source>
</reference>
<evidence type="ECO:0000255" key="1">
    <source>
        <dbReference type="HAMAP-Rule" id="MF_00746"/>
    </source>
</evidence>
<feature type="chain" id="PRO_1000046541" description="Protein SprT">
    <location>
        <begin position="1"/>
        <end position="165"/>
    </location>
</feature>
<feature type="domain" description="SprT-like" evidence="1">
    <location>
        <begin position="22"/>
        <end position="163"/>
    </location>
</feature>
<feature type="active site" evidence="1">
    <location>
        <position position="79"/>
    </location>
</feature>
<feature type="binding site" evidence="1">
    <location>
        <position position="78"/>
    </location>
    <ligand>
        <name>Zn(2+)</name>
        <dbReference type="ChEBI" id="CHEBI:29105"/>
    </ligand>
</feature>
<feature type="binding site" evidence="1">
    <location>
        <position position="82"/>
    </location>
    <ligand>
        <name>Zn(2+)</name>
        <dbReference type="ChEBI" id="CHEBI:29105"/>
    </ligand>
</feature>
<proteinExistence type="inferred from homology"/>
<accession>Q32C13</accession>
<keyword id="KW-0963">Cytoplasm</keyword>
<keyword id="KW-0479">Metal-binding</keyword>
<keyword id="KW-1185">Reference proteome</keyword>
<keyword id="KW-0862">Zinc</keyword>
<gene>
    <name evidence="1" type="primary">sprT</name>
    <name type="ordered locus">SDY_3128</name>
</gene>
<name>SPRT_SHIDS</name>